<name>IL13_PANTR</name>
<organism>
    <name type="scientific">Pan troglodytes</name>
    <name type="common">Chimpanzee</name>
    <dbReference type="NCBI Taxonomy" id="9598"/>
    <lineage>
        <taxon>Eukaryota</taxon>
        <taxon>Metazoa</taxon>
        <taxon>Chordata</taxon>
        <taxon>Craniata</taxon>
        <taxon>Vertebrata</taxon>
        <taxon>Euteleostomi</taxon>
        <taxon>Mammalia</taxon>
        <taxon>Eutheria</taxon>
        <taxon>Euarchontoglires</taxon>
        <taxon>Primates</taxon>
        <taxon>Haplorrhini</taxon>
        <taxon>Catarrhini</taxon>
        <taxon>Hominidae</taxon>
        <taxon>Pan</taxon>
    </lineage>
</organism>
<feature type="signal peptide" evidence="5">
    <location>
        <begin position="1"/>
        <end position="18"/>
    </location>
</feature>
<feature type="chain" id="PRO_0000015551" description="Interleukin-13">
    <location>
        <begin position="19"/>
        <end position="132"/>
    </location>
</feature>
<feature type="glycosylation site" description="N-linked (GlcNAc...) asparagine" evidence="5">
    <location>
        <position position="38"/>
    </location>
</feature>
<feature type="glycosylation site" description="N-linked (GlcNAc...) asparagine" evidence="5">
    <location>
        <position position="49"/>
    </location>
</feature>
<feature type="glycosylation site" description="N-linked (GlcNAc...) asparagine" evidence="5">
    <location>
        <position position="57"/>
    </location>
</feature>
<feature type="glycosylation site" description="N-linked (GlcNAc...) asparagine" evidence="5">
    <location>
        <position position="72"/>
    </location>
</feature>
<feature type="disulfide bond" evidence="3">
    <location>
        <begin position="48"/>
        <end position="76"/>
    </location>
</feature>
<feature type="disulfide bond" evidence="3">
    <location>
        <begin position="64"/>
        <end position="90"/>
    </location>
</feature>
<comment type="function">
    <text evidence="2 3 4">Cytokine that plays important roles in allergic inflammation and immune response to parasite infection. Synergizes with IL2 in regulating interferon-gamma synthesis. Stimulates B-cell proliferation, and activation of eosinophils, basophils, and mast cells (By similarity). Plays an important role in controlling IL33 activity by modulating the production of transmembrane and soluble forms of interleukin-1 receptor-like 1/IL1RL1 (By similarity). Displays the capacity to antagonize Th1-driven proinflammatory immune response and downregulates synthesis of many proinflammatory cytokines including IL1, IL6, IL10, IL12 and TNF-alpha through a mechanism that partially involves suppression of NF-kappa-B (By similarity). Also functions on nonhematopoietic cells, including endothelial cells where it induces vascular cell adhesion protein 1/VCAM1, which is important in the recruitment of eosinophils. Exerts its biological effects through its receptors which comprises the IL4R chain and the IL13RA1 chain, to activate JAK1 and TYK2, leading to the activation of STAT6. Aside from IL13RA1, another receptor IL13RA2 acts as a high affinity decoy for IL13 and mediates internalization and depletion of extracellular IL13 (By similarity).</text>
</comment>
<comment type="subunit">
    <text evidence="1">Interacts with IL13RA2.</text>
</comment>
<comment type="subcellular location">
    <subcellularLocation>
        <location evidence="1">Secreted</location>
    </subcellularLocation>
</comment>
<comment type="similarity">
    <text evidence="6">Belongs to the IL-4/IL-13 family.</text>
</comment>
<proteinExistence type="inferred from homology"/>
<reference key="1">
    <citation type="submission" date="2003-11" db="EMBL/GenBank/DDBJ databases">
        <title>Pan troglodytes genomic region including interleukin 13 (IL13) gene and interleukin 4 (IL4) gene.</title>
        <authorList>
            <person name="Sakagami T."/>
            <person name="Nakajima T."/>
            <person name="Saito N."/>
            <person name="Hayasaka I."/>
            <person name="Inoue I."/>
        </authorList>
    </citation>
    <scope>NUCLEOTIDE SEQUENCE [GENOMIC DNA]</scope>
</reference>
<protein>
    <recommendedName>
        <fullName>Interleukin-13</fullName>
        <shortName>IL-13</shortName>
    </recommendedName>
</protein>
<keyword id="KW-0202">Cytokine</keyword>
<keyword id="KW-1015">Disulfide bond</keyword>
<keyword id="KW-0325">Glycoprotein</keyword>
<keyword id="KW-1185">Reference proteome</keyword>
<keyword id="KW-0964">Secreted</keyword>
<keyword id="KW-0732">Signal</keyword>
<dbReference type="EMBL" id="AY480012">
    <property type="protein sequence ID" value="AAR32991.1"/>
    <property type="molecule type" value="Genomic_DNA"/>
</dbReference>
<dbReference type="RefSeq" id="NP_001008992.1">
    <property type="nucleotide sequence ID" value="NM_001008992.1"/>
</dbReference>
<dbReference type="BMRB" id="P61126"/>
<dbReference type="SMR" id="P61126"/>
<dbReference type="STRING" id="9598.ENSPTRP00000044414"/>
<dbReference type="GlyCosmos" id="P61126">
    <property type="glycosylation" value="4 sites, No reported glycans"/>
</dbReference>
<dbReference type="PaxDb" id="9598-ENSPTRP00000044414"/>
<dbReference type="GeneID" id="449564"/>
<dbReference type="KEGG" id="ptr:449564"/>
<dbReference type="CTD" id="3596"/>
<dbReference type="eggNOG" id="ENOG502SZKX">
    <property type="taxonomic scope" value="Eukaryota"/>
</dbReference>
<dbReference type="HOGENOM" id="CLU_158063_0_0_1"/>
<dbReference type="InParanoid" id="P61126"/>
<dbReference type="OrthoDB" id="12802at9604"/>
<dbReference type="TreeFam" id="TF336383"/>
<dbReference type="Proteomes" id="UP000002277">
    <property type="component" value="Unplaced"/>
</dbReference>
<dbReference type="GO" id="GO:0005615">
    <property type="term" value="C:extracellular space"/>
    <property type="evidence" value="ECO:0000318"/>
    <property type="project" value="GO_Central"/>
</dbReference>
<dbReference type="GO" id="GO:0005125">
    <property type="term" value="F:cytokine activity"/>
    <property type="evidence" value="ECO:0007669"/>
    <property type="project" value="UniProtKB-KW"/>
</dbReference>
<dbReference type="GO" id="GO:0005144">
    <property type="term" value="F:interleukin-13 receptor binding"/>
    <property type="evidence" value="ECO:0000318"/>
    <property type="project" value="GO_Central"/>
</dbReference>
<dbReference type="GO" id="GO:0006955">
    <property type="term" value="P:immune response"/>
    <property type="evidence" value="ECO:0007669"/>
    <property type="project" value="InterPro"/>
</dbReference>
<dbReference type="GO" id="GO:0006954">
    <property type="term" value="P:inflammatory response"/>
    <property type="evidence" value="ECO:0000318"/>
    <property type="project" value="GO_Central"/>
</dbReference>
<dbReference type="GO" id="GO:0002639">
    <property type="term" value="P:positive regulation of immunoglobulin production"/>
    <property type="evidence" value="ECO:0000318"/>
    <property type="project" value="GO_Central"/>
</dbReference>
<dbReference type="FunFam" id="1.20.1250.10:FF:000029">
    <property type="entry name" value="Interleukin-13"/>
    <property type="match status" value="1"/>
</dbReference>
<dbReference type="Gene3D" id="1.20.1250.10">
    <property type="match status" value="1"/>
</dbReference>
<dbReference type="InterPro" id="IPR009079">
    <property type="entry name" value="4_helix_cytokine-like_core"/>
</dbReference>
<dbReference type="InterPro" id="IPR020470">
    <property type="entry name" value="IL-13"/>
</dbReference>
<dbReference type="InterPro" id="IPR001325">
    <property type="entry name" value="IL-4/IL-13"/>
</dbReference>
<dbReference type="InterPro" id="IPR018096">
    <property type="entry name" value="IL-4/IL-13_CS"/>
</dbReference>
<dbReference type="PANTHER" id="PTHR48486">
    <property type="entry name" value="INTERLEUKIN-13"/>
    <property type="match status" value="1"/>
</dbReference>
<dbReference type="PANTHER" id="PTHR48486:SF1">
    <property type="entry name" value="INTERLEUKIN-13"/>
    <property type="match status" value="1"/>
</dbReference>
<dbReference type="Pfam" id="PF03487">
    <property type="entry name" value="IL13"/>
    <property type="match status" value="1"/>
</dbReference>
<dbReference type="PRINTS" id="PR01929">
    <property type="entry name" value="INTRLEUKIN13"/>
</dbReference>
<dbReference type="SMART" id="SM00190">
    <property type="entry name" value="IL4_13"/>
    <property type="match status" value="1"/>
</dbReference>
<dbReference type="SUPFAM" id="SSF47266">
    <property type="entry name" value="4-helical cytokines"/>
    <property type="match status" value="1"/>
</dbReference>
<dbReference type="PROSITE" id="PS00838">
    <property type="entry name" value="INTERLEUKIN_4_13"/>
    <property type="match status" value="1"/>
</dbReference>
<accession>P61126</accession>
<evidence type="ECO:0000250" key="1"/>
<evidence type="ECO:0000250" key="2">
    <source>
        <dbReference type="UniProtKB" id="P20109"/>
    </source>
</evidence>
<evidence type="ECO:0000250" key="3">
    <source>
        <dbReference type="UniProtKB" id="P35225"/>
    </source>
</evidence>
<evidence type="ECO:0000250" key="4">
    <source>
        <dbReference type="UniProtKB" id="P42203"/>
    </source>
</evidence>
<evidence type="ECO:0000255" key="5"/>
<evidence type="ECO:0000305" key="6"/>
<sequence length="132" mass="14287">MALLLTTVIALTCLGGFASPGPVPPSTALRELIEELVNITQNQKAPLCNGSMVWSINLTAGVYCAALESLINVSGCSAIEKTQRMLSGFCPHKVSAGQFSSLHVRDTKIEVAQFVKDLLLHLKKLFREGRFN</sequence>
<gene>
    <name type="primary">IL13</name>
</gene>